<feature type="chain" id="PRO_0000261018" description="Xanthine-guanine phosphoribosyltransferase">
    <location>
        <begin position="1"/>
        <end position="176"/>
    </location>
</feature>
<feature type="binding site" evidence="1">
    <location>
        <begin position="51"/>
        <end position="52"/>
    </location>
    <ligand>
        <name>5-phospho-alpha-D-ribose 1-diphosphate</name>
        <dbReference type="ChEBI" id="CHEBI:58017"/>
    </ligand>
</feature>
<feature type="binding site" evidence="1">
    <location>
        <position position="88"/>
    </location>
    <ligand>
        <name>5-phospho-alpha-D-ribose 1-diphosphate</name>
        <dbReference type="ChEBI" id="CHEBI:58017"/>
    </ligand>
</feature>
<feature type="binding site" evidence="1">
    <location>
        <position position="88"/>
    </location>
    <ligand>
        <name>GMP</name>
        <dbReference type="ChEBI" id="CHEBI:58115"/>
    </ligand>
</feature>
<feature type="binding site" evidence="1">
    <location>
        <begin position="111"/>
        <end position="119"/>
    </location>
    <ligand>
        <name>5-phospho-alpha-D-ribose 1-diphosphate</name>
        <dbReference type="ChEBI" id="CHEBI:58017"/>
    </ligand>
</feature>
<feature type="binding site" evidence="1">
    <location>
        <position position="112"/>
    </location>
    <ligand>
        <name>Mg(2+)</name>
        <dbReference type="ChEBI" id="CHEBI:18420"/>
    </ligand>
</feature>
<feature type="binding site" evidence="1">
    <location>
        <begin position="115"/>
        <end position="119"/>
    </location>
    <ligand>
        <name>GMP</name>
        <dbReference type="ChEBI" id="CHEBI:58115"/>
    </ligand>
</feature>
<feature type="binding site" evidence="1">
    <location>
        <position position="115"/>
    </location>
    <ligand>
        <name>guanine</name>
        <dbReference type="ChEBI" id="CHEBI:16235"/>
    </ligand>
</feature>
<feature type="binding site" evidence="1">
    <location>
        <position position="115"/>
    </location>
    <ligand>
        <name>xanthine</name>
        <dbReference type="ChEBI" id="CHEBI:17712"/>
    </ligand>
</feature>
<feature type="binding site" evidence="1">
    <location>
        <begin position="157"/>
        <end position="158"/>
    </location>
    <ligand>
        <name>GMP</name>
        <dbReference type="ChEBI" id="CHEBI:58115"/>
    </ligand>
</feature>
<feature type="binding site" evidence="1">
    <location>
        <position position="158"/>
    </location>
    <ligand>
        <name>guanine</name>
        <dbReference type="ChEBI" id="CHEBI:16235"/>
    </ligand>
</feature>
<feature type="binding site" evidence="1">
    <location>
        <position position="158"/>
    </location>
    <ligand>
        <name>xanthine</name>
        <dbReference type="ChEBI" id="CHEBI:17712"/>
    </ligand>
</feature>
<accession>Q163Y8</accession>
<gene>
    <name evidence="1" type="primary">gpt</name>
    <name type="ordered locus">RD1_3201</name>
</gene>
<dbReference type="EC" id="2.4.2.-" evidence="1"/>
<dbReference type="EC" id="2.4.2.22" evidence="1"/>
<dbReference type="EMBL" id="CP000362">
    <property type="protein sequence ID" value="ABG32705.1"/>
    <property type="molecule type" value="Genomic_DNA"/>
</dbReference>
<dbReference type="RefSeq" id="WP_011569321.1">
    <property type="nucleotide sequence ID" value="NC_008209.1"/>
</dbReference>
<dbReference type="SMR" id="Q163Y8"/>
<dbReference type="STRING" id="375451.RD1_3201"/>
<dbReference type="KEGG" id="rde:RD1_3201"/>
<dbReference type="eggNOG" id="COG2236">
    <property type="taxonomic scope" value="Bacteria"/>
</dbReference>
<dbReference type="HOGENOM" id="CLU_080904_3_0_5"/>
<dbReference type="OrthoDB" id="9789690at2"/>
<dbReference type="UniPathway" id="UPA00602">
    <property type="reaction ID" value="UER00658"/>
</dbReference>
<dbReference type="UniPathway" id="UPA00909">
    <property type="reaction ID" value="UER00887"/>
</dbReference>
<dbReference type="Proteomes" id="UP000007029">
    <property type="component" value="Chromosome"/>
</dbReference>
<dbReference type="GO" id="GO:0005886">
    <property type="term" value="C:plasma membrane"/>
    <property type="evidence" value="ECO:0007669"/>
    <property type="project" value="UniProtKB-SubCell"/>
</dbReference>
<dbReference type="GO" id="GO:0052657">
    <property type="term" value="F:guanine phosphoribosyltransferase activity"/>
    <property type="evidence" value="ECO:0007669"/>
    <property type="project" value="RHEA"/>
</dbReference>
<dbReference type="GO" id="GO:0004422">
    <property type="term" value="F:hypoxanthine phosphoribosyltransferase activity"/>
    <property type="evidence" value="ECO:0007669"/>
    <property type="project" value="RHEA"/>
</dbReference>
<dbReference type="GO" id="GO:0000287">
    <property type="term" value="F:magnesium ion binding"/>
    <property type="evidence" value="ECO:0007669"/>
    <property type="project" value="UniProtKB-UniRule"/>
</dbReference>
<dbReference type="GO" id="GO:0000310">
    <property type="term" value="F:xanthine phosphoribosyltransferase activity"/>
    <property type="evidence" value="ECO:0007669"/>
    <property type="project" value="UniProtKB-UniRule"/>
</dbReference>
<dbReference type="GO" id="GO:0032263">
    <property type="term" value="P:GMP salvage"/>
    <property type="evidence" value="ECO:0007669"/>
    <property type="project" value="UniProtKB-UniRule"/>
</dbReference>
<dbReference type="GO" id="GO:0006166">
    <property type="term" value="P:purine ribonucleoside salvage"/>
    <property type="evidence" value="ECO:0007669"/>
    <property type="project" value="UniProtKB-KW"/>
</dbReference>
<dbReference type="GO" id="GO:0032265">
    <property type="term" value="P:XMP salvage"/>
    <property type="evidence" value="ECO:0007669"/>
    <property type="project" value="UniProtKB-UniRule"/>
</dbReference>
<dbReference type="CDD" id="cd06223">
    <property type="entry name" value="PRTases_typeI"/>
    <property type="match status" value="1"/>
</dbReference>
<dbReference type="Gene3D" id="3.40.50.2020">
    <property type="match status" value="1"/>
</dbReference>
<dbReference type="HAMAP" id="MF_01903">
    <property type="entry name" value="XGPRT"/>
    <property type="match status" value="1"/>
</dbReference>
<dbReference type="InterPro" id="IPR000836">
    <property type="entry name" value="PRibTrfase_dom"/>
</dbReference>
<dbReference type="InterPro" id="IPR029057">
    <property type="entry name" value="PRTase-like"/>
</dbReference>
<dbReference type="InterPro" id="IPR023747">
    <property type="entry name" value="Xanthine_Guanine_PRibTrfase"/>
</dbReference>
<dbReference type="NCBIfam" id="NF006613">
    <property type="entry name" value="PRK09177.1"/>
    <property type="match status" value="1"/>
</dbReference>
<dbReference type="PANTHER" id="PTHR39563">
    <property type="entry name" value="XANTHINE PHOSPHORIBOSYLTRANSFERASE"/>
    <property type="match status" value="1"/>
</dbReference>
<dbReference type="PANTHER" id="PTHR39563:SF1">
    <property type="entry name" value="XANTHINE-GUANINE PHOSPHORIBOSYLTRANSFERASE"/>
    <property type="match status" value="1"/>
</dbReference>
<dbReference type="Pfam" id="PF00156">
    <property type="entry name" value="Pribosyltran"/>
    <property type="match status" value="1"/>
</dbReference>
<dbReference type="SUPFAM" id="SSF53271">
    <property type="entry name" value="PRTase-like"/>
    <property type="match status" value="1"/>
</dbReference>
<dbReference type="PROSITE" id="PS00103">
    <property type="entry name" value="PUR_PYR_PR_TRANSFER"/>
    <property type="match status" value="1"/>
</dbReference>
<keyword id="KW-0997">Cell inner membrane</keyword>
<keyword id="KW-1003">Cell membrane</keyword>
<keyword id="KW-0328">Glycosyltransferase</keyword>
<keyword id="KW-0460">Magnesium</keyword>
<keyword id="KW-0472">Membrane</keyword>
<keyword id="KW-0479">Metal-binding</keyword>
<keyword id="KW-0660">Purine salvage</keyword>
<keyword id="KW-1185">Reference proteome</keyword>
<keyword id="KW-0808">Transferase</keyword>
<evidence type="ECO:0000255" key="1">
    <source>
        <dbReference type="HAMAP-Rule" id="MF_01903"/>
    </source>
</evidence>
<proteinExistence type="inferred from homology"/>
<organism>
    <name type="scientific">Roseobacter denitrificans (strain ATCC 33942 / OCh 114)</name>
    <name type="common">Erythrobacter sp. (strain OCh 114)</name>
    <name type="synonym">Roseobacter denitrificans</name>
    <dbReference type="NCBI Taxonomy" id="375451"/>
    <lineage>
        <taxon>Bacteria</taxon>
        <taxon>Pseudomonadati</taxon>
        <taxon>Pseudomonadota</taxon>
        <taxon>Alphaproteobacteria</taxon>
        <taxon>Rhodobacterales</taxon>
        <taxon>Roseobacteraceae</taxon>
        <taxon>Roseobacter</taxon>
    </lineage>
</organism>
<name>XGPT_ROSDO</name>
<protein>
    <recommendedName>
        <fullName evidence="1">Xanthine-guanine phosphoribosyltransferase</fullName>
        <shortName evidence="1">XGPRT</shortName>
        <ecNumber evidence="1">2.4.2.-</ecNumber>
        <ecNumber evidence="1">2.4.2.22</ecNumber>
    </recommendedName>
    <alternativeName>
        <fullName evidence="1">Xanthine phosphoribosyltransferase</fullName>
    </alternativeName>
</protein>
<sequence>MSSKDQSRLPHEKGFHISWDQIHRDSRALAWRLDGQGPDEGAWRAVVAITRGGMAPAMIVARELDIRVVDTISVMSYHSGGGKADQRRDAKVLKAPDADMMGDGTGILIVDDLVDSGKTLELVRAQYPNAHFATVYAKPQGEPQVNTFITGVSQDTWIFFPWDMALQYVEPYRGTD</sequence>
<comment type="function">
    <text evidence="1">Purine salvage pathway enzyme that catalyzes the transfer of the ribosyl-5-phosphate group from 5-phospho-alpha-D-ribose 1-diphosphate (PRPP) to the N9 position of the 6-oxopurines guanine and xanthine to form the corresponding ribonucleotides GMP (guanosine 5'-monophosphate) and XMP (xanthosine 5'-monophosphate), with the release of PPi. To a lesser extent, also acts on hypoxanthine.</text>
</comment>
<comment type="catalytic activity">
    <reaction evidence="1">
        <text>GMP + diphosphate = guanine + 5-phospho-alpha-D-ribose 1-diphosphate</text>
        <dbReference type="Rhea" id="RHEA:25424"/>
        <dbReference type="ChEBI" id="CHEBI:16235"/>
        <dbReference type="ChEBI" id="CHEBI:33019"/>
        <dbReference type="ChEBI" id="CHEBI:58017"/>
        <dbReference type="ChEBI" id="CHEBI:58115"/>
    </reaction>
    <physiologicalReaction direction="right-to-left" evidence="1">
        <dbReference type="Rhea" id="RHEA:25426"/>
    </physiologicalReaction>
</comment>
<comment type="catalytic activity">
    <reaction evidence="1">
        <text>XMP + diphosphate = xanthine + 5-phospho-alpha-D-ribose 1-diphosphate</text>
        <dbReference type="Rhea" id="RHEA:10800"/>
        <dbReference type="ChEBI" id="CHEBI:17712"/>
        <dbReference type="ChEBI" id="CHEBI:33019"/>
        <dbReference type="ChEBI" id="CHEBI:57464"/>
        <dbReference type="ChEBI" id="CHEBI:58017"/>
        <dbReference type="EC" id="2.4.2.22"/>
    </reaction>
    <physiologicalReaction direction="right-to-left" evidence="1">
        <dbReference type="Rhea" id="RHEA:10802"/>
    </physiologicalReaction>
</comment>
<comment type="catalytic activity">
    <reaction evidence="1">
        <text>IMP + diphosphate = hypoxanthine + 5-phospho-alpha-D-ribose 1-diphosphate</text>
        <dbReference type="Rhea" id="RHEA:17973"/>
        <dbReference type="ChEBI" id="CHEBI:17368"/>
        <dbReference type="ChEBI" id="CHEBI:33019"/>
        <dbReference type="ChEBI" id="CHEBI:58017"/>
        <dbReference type="ChEBI" id="CHEBI:58053"/>
    </reaction>
    <physiologicalReaction direction="right-to-left" evidence="1">
        <dbReference type="Rhea" id="RHEA:17975"/>
    </physiologicalReaction>
</comment>
<comment type="cofactor">
    <cofactor evidence="1">
        <name>Mg(2+)</name>
        <dbReference type="ChEBI" id="CHEBI:18420"/>
    </cofactor>
</comment>
<comment type="pathway">
    <text evidence="1">Purine metabolism; GMP biosynthesis via salvage pathway; GMP from guanine: step 1/1.</text>
</comment>
<comment type="pathway">
    <text evidence="1">Purine metabolism; XMP biosynthesis via salvage pathway; XMP from xanthine: step 1/1.</text>
</comment>
<comment type="subunit">
    <text evidence="1">Homotetramer.</text>
</comment>
<comment type="subcellular location">
    <subcellularLocation>
        <location evidence="1">Cell inner membrane</location>
        <topology evidence="1">Peripheral membrane protein</topology>
    </subcellularLocation>
</comment>
<comment type="similarity">
    <text evidence="1">Belongs to the purine/pyrimidine phosphoribosyltransferase family. XGPT subfamily.</text>
</comment>
<reference key="1">
    <citation type="journal article" date="2007" name="J. Bacteriol.">
        <title>The complete genome sequence of Roseobacter denitrificans reveals a mixotrophic rather than photosynthetic metabolism.</title>
        <authorList>
            <person name="Swingley W.D."/>
            <person name="Sadekar S."/>
            <person name="Mastrian S.D."/>
            <person name="Matthies H.J."/>
            <person name="Hao J."/>
            <person name="Ramos H."/>
            <person name="Acharya C.R."/>
            <person name="Conrad A.L."/>
            <person name="Taylor H.L."/>
            <person name="Dejesa L.C."/>
            <person name="Shah M.K."/>
            <person name="O'Huallachain M.E."/>
            <person name="Lince M.T."/>
            <person name="Blankenship R.E."/>
            <person name="Beatty J.T."/>
            <person name="Touchman J.W."/>
        </authorList>
    </citation>
    <scope>NUCLEOTIDE SEQUENCE [LARGE SCALE GENOMIC DNA]</scope>
    <source>
        <strain>ATCC 33942 / OCh 114</strain>
    </source>
</reference>